<protein>
    <recommendedName>
        <fullName>Centriolar satellite-associated tubulin polyglutamylase complex regulator 1</fullName>
    </recommendedName>
</protein>
<proteinExistence type="evidence at transcript level"/>
<name>CSTP1_BOVIN</name>
<organism>
    <name type="scientific">Bos taurus</name>
    <name type="common">Bovine</name>
    <dbReference type="NCBI Taxonomy" id="9913"/>
    <lineage>
        <taxon>Eukaryota</taxon>
        <taxon>Metazoa</taxon>
        <taxon>Chordata</taxon>
        <taxon>Craniata</taxon>
        <taxon>Vertebrata</taxon>
        <taxon>Euteleostomi</taxon>
        <taxon>Mammalia</taxon>
        <taxon>Eutheria</taxon>
        <taxon>Laurasiatheria</taxon>
        <taxon>Artiodactyla</taxon>
        <taxon>Ruminantia</taxon>
        <taxon>Pecora</taxon>
        <taxon>Bovidae</taxon>
        <taxon>Bovinae</taxon>
        <taxon>Bos</taxon>
    </lineage>
</organism>
<comment type="function">
    <text evidence="1">Regulator of the tubulin polyglutamylase complex (TPGC) that controls cytoskeletal organization, nuclear shape, and cilium disassembly by balancing microtubule and actin assembly. Regulates the assembly and stability of the TPGC and thereby modulates polyglutamylation of the microtubule, which antagonizes MAP4 binding.</text>
</comment>
<comment type="subunit">
    <text evidence="1">Interacts with PCM1. Interacts with TTLL1, TPGS1, TPGS2 and LRRC49; the interactions link CSTPP1 to the complex TPGC. Binds to alpha-tubulin.</text>
</comment>
<comment type="subcellular location">
    <subcellularLocation>
        <location evidence="1">Cytoplasm</location>
        <location evidence="1">Cytoskeleton</location>
        <location evidence="1">Microtubule organizing center</location>
        <location evidence="1">Centrosome</location>
        <location evidence="1">Centriolar satellite</location>
    </subcellularLocation>
    <subcellularLocation>
        <location evidence="1">Cytoplasm</location>
        <location evidence="1">Cytoskeleton</location>
    </subcellularLocation>
    <text evidence="1">Associated with microtubules.</text>
</comment>
<comment type="similarity">
    <text evidence="2">Belongs to the CSTPP1 family.</text>
</comment>
<keyword id="KW-0963">Cytoplasm</keyword>
<keyword id="KW-0206">Cytoskeleton</keyword>
<keyword id="KW-0493">Microtubule</keyword>
<keyword id="KW-0597">Phosphoprotein</keyword>
<keyword id="KW-1185">Reference proteome</keyword>
<sequence length="326" mass="37423">MLSPERLALPDYEYLAQRHVLTYVEDAVCQLLENKEDISQYGIARFFTEYFNSVCQGTHILFREFSFIQATPHNRASFLRAFWRCFRTVGKNGDLLTMREYHCLLQLLCPDFPLELTQKAARIVLMDDAMDCLMSFSDFLFAFQIQFYYSEFLESVAAIYQDLLSGKNPNTVIVPTSSSGQHRHRPSTGEAGTPEGVEASLFYQCLENLCDRHKYSCPPPALVKEVLSNVQRLTFYGFLVALSKHHGINQALGALPDKGDLMHDPAMDEELERLVLRWRPHRSSRQHRAKEPGAFGYQRRDKLEALQTVPPASAPTPCLYQWEPIE</sequence>
<feature type="chain" id="PRO_0000281424" description="Centriolar satellite-associated tubulin polyglutamylase complex regulator 1">
    <location>
        <begin position="1"/>
        <end position="326"/>
    </location>
</feature>
<feature type="region of interest" description="Required for interaction with TPGS1, LRRC49, and TTLL1" evidence="1">
    <location>
        <begin position="1"/>
        <end position="225"/>
    </location>
</feature>
<feature type="region of interest" description="Required for interaction with PCM1" evidence="1">
    <location>
        <begin position="1"/>
        <end position="111"/>
    </location>
</feature>
<gene>
    <name type="primary">CSTPP1</name>
</gene>
<accession>Q32KQ7</accession>
<dbReference type="EMBL" id="BC109973">
    <property type="protein sequence ID" value="AAI09974.1"/>
    <property type="molecule type" value="mRNA"/>
</dbReference>
<dbReference type="RefSeq" id="NP_001033126.1">
    <property type="nucleotide sequence ID" value="NM_001038037.2"/>
</dbReference>
<dbReference type="FunCoup" id="Q32KQ7">
    <property type="interactions" value="1699"/>
</dbReference>
<dbReference type="STRING" id="9913.ENSBTAP00000061891"/>
<dbReference type="PaxDb" id="9913-ENSBTAP00000039371"/>
<dbReference type="GeneID" id="505437"/>
<dbReference type="KEGG" id="bta:505437"/>
<dbReference type="CTD" id="79096"/>
<dbReference type="eggNOG" id="ENOG502QRVN">
    <property type="taxonomic scope" value="Eukaryota"/>
</dbReference>
<dbReference type="InParanoid" id="Q32KQ7"/>
<dbReference type="OrthoDB" id="197906at2759"/>
<dbReference type="Proteomes" id="UP000009136">
    <property type="component" value="Unplaced"/>
</dbReference>
<dbReference type="GO" id="GO:0034451">
    <property type="term" value="C:centriolar satellite"/>
    <property type="evidence" value="ECO:0007669"/>
    <property type="project" value="UniProtKB-SubCell"/>
</dbReference>
<dbReference type="GO" id="GO:0005737">
    <property type="term" value="C:cytoplasm"/>
    <property type="evidence" value="ECO:0007669"/>
    <property type="project" value="UniProtKB-KW"/>
</dbReference>
<dbReference type="GO" id="GO:0005874">
    <property type="term" value="C:microtubule"/>
    <property type="evidence" value="ECO:0007669"/>
    <property type="project" value="UniProtKB-KW"/>
</dbReference>
<dbReference type="CDD" id="cd22959">
    <property type="entry name" value="DD_C11orf49"/>
    <property type="match status" value="1"/>
</dbReference>
<dbReference type="InterPro" id="IPR038968">
    <property type="entry name" value="CSTPP1"/>
</dbReference>
<dbReference type="PANTHER" id="PTHR34252:SF1">
    <property type="entry name" value="CENTRIOLAR SATELLITE-ASSOCIATED TUBULIN POLYGLUTAMYLASE COMPLEX REGULATOR 1"/>
    <property type="match status" value="1"/>
</dbReference>
<dbReference type="PANTHER" id="PTHR34252">
    <property type="entry name" value="UPF0705 PROTEIN C11ORF49"/>
    <property type="match status" value="1"/>
</dbReference>
<reference key="1">
    <citation type="submission" date="2005-11" db="EMBL/GenBank/DDBJ databases">
        <authorList>
            <consortium name="NIH - Mammalian Gene Collection (MGC) project"/>
        </authorList>
    </citation>
    <scope>NUCLEOTIDE SEQUENCE [LARGE SCALE MRNA]</scope>
    <source>
        <strain>Crossbred X Angus</strain>
        <tissue>Liver</tissue>
    </source>
</reference>
<evidence type="ECO:0000250" key="1">
    <source>
        <dbReference type="UniProtKB" id="Q9H6J7"/>
    </source>
</evidence>
<evidence type="ECO:0000305" key="2"/>